<gene>
    <name evidence="1" type="primary">rpsI</name>
    <name type="ordered locus">SpyM51619</name>
</gene>
<accession>A2RGF8</accession>
<evidence type="ECO:0000255" key="1">
    <source>
        <dbReference type="HAMAP-Rule" id="MF_00532"/>
    </source>
</evidence>
<evidence type="ECO:0000305" key="2"/>
<organism>
    <name type="scientific">Streptococcus pyogenes serotype M5 (strain Manfredo)</name>
    <dbReference type="NCBI Taxonomy" id="160491"/>
    <lineage>
        <taxon>Bacteria</taxon>
        <taxon>Bacillati</taxon>
        <taxon>Bacillota</taxon>
        <taxon>Bacilli</taxon>
        <taxon>Lactobacillales</taxon>
        <taxon>Streptococcaceae</taxon>
        <taxon>Streptococcus</taxon>
    </lineage>
</organism>
<keyword id="KW-0687">Ribonucleoprotein</keyword>
<keyword id="KW-0689">Ribosomal protein</keyword>
<feature type="chain" id="PRO_1000051344" description="Small ribosomal subunit protein uS9">
    <location>
        <begin position="1"/>
        <end position="130"/>
    </location>
</feature>
<proteinExistence type="inferred from homology"/>
<dbReference type="EMBL" id="AM295007">
    <property type="protein sequence ID" value="CAM30940.1"/>
    <property type="molecule type" value="Genomic_DNA"/>
</dbReference>
<dbReference type="RefSeq" id="WP_002982716.1">
    <property type="nucleotide sequence ID" value="NC_009332.1"/>
</dbReference>
<dbReference type="SMR" id="A2RGF8"/>
<dbReference type="GeneID" id="83689365"/>
<dbReference type="KEGG" id="spf:SpyM51619"/>
<dbReference type="HOGENOM" id="CLU_046483_2_1_9"/>
<dbReference type="GO" id="GO:0022627">
    <property type="term" value="C:cytosolic small ribosomal subunit"/>
    <property type="evidence" value="ECO:0007669"/>
    <property type="project" value="TreeGrafter"/>
</dbReference>
<dbReference type="GO" id="GO:0003723">
    <property type="term" value="F:RNA binding"/>
    <property type="evidence" value="ECO:0007669"/>
    <property type="project" value="TreeGrafter"/>
</dbReference>
<dbReference type="GO" id="GO:0003735">
    <property type="term" value="F:structural constituent of ribosome"/>
    <property type="evidence" value="ECO:0007669"/>
    <property type="project" value="InterPro"/>
</dbReference>
<dbReference type="GO" id="GO:0006412">
    <property type="term" value="P:translation"/>
    <property type="evidence" value="ECO:0007669"/>
    <property type="project" value="UniProtKB-UniRule"/>
</dbReference>
<dbReference type="FunFam" id="3.30.230.10:FF:000001">
    <property type="entry name" value="30S ribosomal protein S9"/>
    <property type="match status" value="1"/>
</dbReference>
<dbReference type="Gene3D" id="3.30.230.10">
    <property type="match status" value="1"/>
</dbReference>
<dbReference type="HAMAP" id="MF_00532_B">
    <property type="entry name" value="Ribosomal_uS9_B"/>
    <property type="match status" value="1"/>
</dbReference>
<dbReference type="InterPro" id="IPR020568">
    <property type="entry name" value="Ribosomal_Su5_D2-typ_SF"/>
</dbReference>
<dbReference type="InterPro" id="IPR000754">
    <property type="entry name" value="Ribosomal_uS9"/>
</dbReference>
<dbReference type="InterPro" id="IPR023035">
    <property type="entry name" value="Ribosomal_uS9_bac/plastid"/>
</dbReference>
<dbReference type="InterPro" id="IPR020574">
    <property type="entry name" value="Ribosomal_uS9_CS"/>
</dbReference>
<dbReference type="InterPro" id="IPR014721">
    <property type="entry name" value="Ribsml_uS5_D2-typ_fold_subgr"/>
</dbReference>
<dbReference type="NCBIfam" id="NF001099">
    <property type="entry name" value="PRK00132.1"/>
    <property type="match status" value="1"/>
</dbReference>
<dbReference type="PANTHER" id="PTHR21569">
    <property type="entry name" value="RIBOSOMAL PROTEIN S9"/>
    <property type="match status" value="1"/>
</dbReference>
<dbReference type="PANTHER" id="PTHR21569:SF1">
    <property type="entry name" value="SMALL RIBOSOMAL SUBUNIT PROTEIN US9M"/>
    <property type="match status" value="1"/>
</dbReference>
<dbReference type="Pfam" id="PF00380">
    <property type="entry name" value="Ribosomal_S9"/>
    <property type="match status" value="1"/>
</dbReference>
<dbReference type="SUPFAM" id="SSF54211">
    <property type="entry name" value="Ribosomal protein S5 domain 2-like"/>
    <property type="match status" value="1"/>
</dbReference>
<dbReference type="PROSITE" id="PS00360">
    <property type="entry name" value="RIBOSOMAL_S9"/>
    <property type="match status" value="1"/>
</dbReference>
<reference key="1">
    <citation type="journal article" date="2007" name="J. Bacteriol.">
        <title>Complete genome of acute rheumatic fever-associated serotype M5 Streptococcus pyogenes strain Manfredo.</title>
        <authorList>
            <person name="Holden M.T.G."/>
            <person name="Scott A."/>
            <person name="Cherevach I."/>
            <person name="Chillingworth T."/>
            <person name="Churcher C."/>
            <person name="Cronin A."/>
            <person name="Dowd L."/>
            <person name="Feltwell T."/>
            <person name="Hamlin N."/>
            <person name="Holroyd S."/>
            <person name="Jagels K."/>
            <person name="Moule S."/>
            <person name="Mungall K."/>
            <person name="Quail M.A."/>
            <person name="Price C."/>
            <person name="Rabbinowitsch E."/>
            <person name="Sharp S."/>
            <person name="Skelton J."/>
            <person name="Whitehead S."/>
            <person name="Barrell B.G."/>
            <person name="Kehoe M."/>
            <person name="Parkhill J."/>
        </authorList>
    </citation>
    <scope>NUCLEOTIDE SEQUENCE [LARGE SCALE GENOMIC DNA]</scope>
    <source>
        <strain>Manfredo</strain>
    </source>
</reference>
<sequence length="130" mass="14235">MAQAQYAGTGRRKNAVARVRLVPGTGKITVNKKDVEEYIPHADLRLIINQPFAVTSTEGSYDVFVNVVGGGYGGQSGAIRHGIARALLQVDPDFRDSLKRAGLLTRDARMVERKKPGLKKARKASQFSKR</sequence>
<name>RS9_STRPG</name>
<protein>
    <recommendedName>
        <fullName evidence="1">Small ribosomal subunit protein uS9</fullName>
    </recommendedName>
    <alternativeName>
        <fullName evidence="2">30S ribosomal protein S9</fullName>
    </alternativeName>
</protein>
<comment type="similarity">
    <text evidence="1">Belongs to the universal ribosomal protein uS9 family.</text>
</comment>